<sequence>MSFFVNRVWYGNHFLQWILVPFSWLYRIVIRTRRWYLQRFCQQLYPIPIIVVGNVTVGGVGKTPLVIEIAKKIQQKGLKVGIVSRGYKAAIKHFPYEVKLNDSAELVGDEPLMMARKINCPVVIAPKRNEAVRYLLDKHSVEIIISDDGLQHYKMGRSIEIVVIDGMRKLGNGFCLPAGPLREPDSRLKQVDFVIVNQGAAGGAYSMELIPKNIVRLSTQEEVSKDSFTSEVAAVAGIGNPQRFYSTLSQLGIKFNPYSYPDHHQFKPHDLNDIDLPVIMTEKDAVKCYSFSSDKLYYLPVEAKLNDSFWEAFWSHQQLQGYY</sequence>
<comment type="function">
    <text evidence="1">Transfers the gamma-phosphate of ATP to the 4'-position of a tetraacyldisaccharide 1-phosphate intermediate (termed DS-1-P) to form tetraacyldisaccharide 1,4'-bis-phosphate (lipid IVA).</text>
</comment>
<comment type="catalytic activity">
    <reaction evidence="1">
        <text>a lipid A disaccharide + ATP = a lipid IVA + ADP + H(+)</text>
        <dbReference type="Rhea" id="RHEA:67840"/>
        <dbReference type="ChEBI" id="CHEBI:15378"/>
        <dbReference type="ChEBI" id="CHEBI:30616"/>
        <dbReference type="ChEBI" id="CHEBI:176343"/>
        <dbReference type="ChEBI" id="CHEBI:176425"/>
        <dbReference type="ChEBI" id="CHEBI:456216"/>
        <dbReference type="EC" id="2.7.1.130"/>
    </reaction>
</comment>
<comment type="pathway">
    <text evidence="1">Glycolipid biosynthesis; lipid IV(A) biosynthesis; lipid IV(A) from (3R)-3-hydroxytetradecanoyl-[acyl-carrier-protein] and UDP-N-acetyl-alpha-D-glucosamine: step 6/6.</text>
</comment>
<comment type="similarity">
    <text evidence="1">Belongs to the LpxK family.</text>
</comment>
<gene>
    <name evidence="1" type="primary">lpxK</name>
    <name type="ordered locus">lpl1782</name>
</gene>
<feature type="chain" id="PRO_0000229960" description="Tetraacyldisaccharide 4'-kinase">
    <location>
        <begin position="1"/>
        <end position="323"/>
    </location>
</feature>
<feature type="binding site" evidence="1">
    <location>
        <begin position="56"/>
        <end position="63"/>
    </location>
    <ligand>
        <name>ATP</name>
        <dbReference type="ChEBI" id="CHEBI:30616"/>
    </ligand>
</feature>
<keyword id="KW-0067">ATP-binding</keyword>
<keyword id="KW-0418">Kinase</keyword>
<keyword id="KW-0441">Lipid A biosynthesis</keyword>
<keyword id="KW-0444">Lipid biosynthesis</keyword>
<keyword id="KW-0443">Lipid metabolism</keyword>
<keyword id="KW-0547">Nucleotide-binding</keyword>
<keyword id="KW-0808">Transferase</keyword>
<proteinExistence type="inferred from homology"/>
<reference key="1">
    <citation type="journal article" date="2004" name="Nat. Genet.">
        <title>Evidence in the Legionella pneumophila genome for exploitation of host cell functions and high genome plasticity.</title>
        <authorList>
            <person name="Cazalet C."/>
            <person name="Rusniok C."/>
            <person name="Brueggemann H."/>
            <person name="Zidane N."/>
            <person name="Magnier A."/>
            <person name="Ma L."/>
            <person name="Tichit M."/>
            <person name="Jarraud S."/>
            <person name="Bouchier C."/>
            <person name="Vandenesch F."/>
            <person name="Kunst F."/>
            <person name="Etienne J."/>
            <person name="Glaser P."/>
            <person name="Buchrieser C."/>
        </authorList>
    </citation>
    <scope>NUCLEOTIDE SEQUENCE [LARGE SCALE GENOMIC DNA]</scope>
    <source>
        <strain>Lens</strain>
    </source>
</reference>
<dbReference type="EC" id="2.7.1.130" evidence="1"/>
<dbReference type="EMBL" id="CR628337">
    <property type="protein sequence ID" value="CAH16021.1"/>
    <property type="molecule type" value="Genomic_DNA"/>
</dbReference>
<dbReference type="RefSeq" id="WP_011215789.1">
    <property type="nucleotide sequence ID" value="NC_006369.1"/>
</dbReference>
<dbReference type="SMR" id="Q5WVN3"/>
<dbReference type="KEGG" id="lpf:lpl1782"/>
<dbReference type="LegioList" id="lpl1782"/>
<dbReference type="HOGENOM" id="CLU_038816_2_0_6"/>
<dbReference type="UniPathway" id="UPA00359">
    <property type="reaction ID" value="UER00482"/>
</dbReference>
<dbReference type="Proteomes" id="UP000002517">
    <property type="component" value="Chromosome"/>
</dbReference>
<dbReference type="GO" id="GO:0005886">
    <property type="term" value="C:plasma membrane"/>
    <property type="evidence" value="ECO:0007669"/>
    <property type="project" value="TreeGrafter"/>
</dbReference>
<dbReference type="GO" id="GO:0005524">
    <property type="term" value="F:ATP binding"/>
    <property type="evidence" value="ECO:0007669"/>
    <property type="project" value="UniProtKB-UniRule"/>
</dbReference>
<dbReference type="GO" id="GO:0009029">
    <property type="term" value="F:tetraacyldisaccharide 4'-kinase activity"/>
    <property type="evidence" value="ECO:0007669"/>
    <property type="project" value="UniProtKB-UniRule"/>
</dbReference>
<dbReference type="GO" id="GO:0009245">
    <property type="term" value="P:lipid A biosynthetic process"/>
    <property type="evidence" value="ECO:0007669"/>
    <property type="project" value="UniProtKB-UniRule"/>
</dbReference>
<dbReference type="GO" id="GO:0009244">
    <property type="term" value="P:lipopolysaccharide core region biosynthetic process"/>
    <property type="evidence" value="ECO:0007669"/>
    <property type="project" value="TreeGrafter"/>
</dbReference>
<dbReference type="HAMAP" id="MF_00409">
    <property type="entry name" value="LpxK"/>
    <property type="match status" value="1"/>
</dbReference>
<dbReference type="InterPro" id="IPR003758">
    <property type="entry name" value="LpxK"/>
</dbReference>
<dbReference type="InterPro" id="IPR027417">
    <property type="entry name" value="P-loop_NTPase"/>
</dbReference>
<dbReference type="NCBIfam" id="TIGR00682">
    <property type="entry name" value="lpxK"/>
    <property type="match status" value="1"/>
</dbReference>
<dbReference type="PANTHER" id="PTHR42724">
    <property type="entry name" value="TETRAACYLDISACCHARIDE 4'-KINASE"/>
    <property type="match status" value="1"/>
</dbReference>
<dbReference type="PANTHER" id="PTHR42724:SF1">
    <property type="entry name" value="TETRAACYLDISACCHARIDE 4'-KINASE, MITOCHONDRIAL-RELATED"/>
    <property type="match status" value="1"/>
</dbReference>
<dbReference type="Pfam" id="PF02606">
    <property type="entry name" value="LpxK"/>
    <property type="match status" value="1"/>
</dbReference>
<dbReference type="SUPFAM" id="SSF52540">
    <property type="entry name" value="P-loop containing nucleoside triphosphate hydrolases"/>
    <property type="match status" value="1"/>
</dbReference>
<evidence type="ECO:0000255" key="1">
    <source>
        <dbReference type="HAMAP-Rule" id="MF_00409"/>
    </source>
</evidence>
<protein>
    <recommendedName>
        <fullName evidence="1">Tetraacyldisaccharide 4'-kinase</fullName>
        <ecNumber evidence="1">2.7.1.130</ecNumber>
    </recommendedName>
    <alternativeName>
        <fullName evidence="1">Lipid A 4'-kinase</fullName>
    </alternativeName>
</protein>
<accession>Q5WVN3</accession>
<organism>
    <name type="scientific">Legionella pneumophila (strain Lens)</name>
    <dbReference type="NCBI Taxonomy" id="297245"/>
    <lineage>
        <taxon>Bacteria</taxon>
        <taxon>Pseudomonadati</taxon>
        <taxon>Pseudomonadota</taxon>
        <taxon>Gammaproteobacteria</taxon>
        <taxon>Legionellales</taxon>
        <taxon>Legionellaceae</taxon>
        <taxon>Legionella</taxon>
    </lineage>
</organism>
<name>LPXK_LEGPL</name>